<keyword id="KW-0175">Coiled coil</keyword>
<keyword id="KW-0967">Endosome</keyword>
<keyword id="KW-0325">Glycoprotein</keyword>
<keyword id="KW-0333">Golgi apparatus</keyword>
<keyword id="KW-0449">Lipoprotein</keyword>
<keyword id="KW-0472">Membrane</keyword>
<keyword id="KW-0519">Myristate</keyword>
<keyword id="KW-0597">Phosphoprotein</keyword>
<keyword id="KW-1267">Proteomics identification</keyword>
<keyword id="KW-1185">Reference proteome</keyword>
<keyword id="KW-0735">Signal-anchor</keyword>
<keyword id="KW-0812">Transmembrane</keyword>
<keyword id="KW-1133">Transmembrane helix</keyword>
<keyword id="KW-0813">Transport</keyword>
<gene>
    <name type="primary">GOLIM4</name>
    <name type="synonym">GIMPC</name>
    <name type="synonym">GOLPH4</name>
    <name type="synonym">GPP130</name>
</gene>
<organism>
    <name type="scientific">Homo sapiens</name>
    <name type="common">Human</name>
    <dbReference type="NCBI Taxonomy" id="9606"/>
    <lineage>
        <taxon>Eukaryota</taxon>
        <taxon>Metazoa</taxon>
        <taxon>Chordata</taxon>
        <taxon>Craniata</taxon>
        <taxon>Vertebrata</taxon>
        <taxon>Euteleostomi</taxon>
        <taxon>Mammalia</taxon>
        <taxon>Eutheria</taxon>
        <taxon>Euarchontoglires</taxon>
        <taxon>Primates</taxon>
        <taxon>Haplorrhini</taxon>
        <taxon>Catarrhini</taxon>
        <taxon>Hominidae</taxon>
        <taxon>Homo</taxon>
    </lineage>
</organism>
<accession>O00461</accession>
<name>GOLI4_HUMAN</name>
<protein>
    <recommendedName>
        <fullName>Golgi integral membrane protein 4</fullName>
    </recommendedName>
    <alternativeName>
        <fullName>Golgi integral membrane protein, cis</fullName>
        <shortName>GIMPc</shortName>
    </alternativeName>
    <alternativeName>
        <fullName>Golgi phosphoprotein 4</fullName>
    </alternativeName>
    <alternativeName>
        <fullName>Golgi-localized phosphoprotein of 130 kDa</fullName>
        <shortName>Golgi phosphoprotein of 130 kDa</shortName>
    </alternativeName>
</protein>
<feature type="initiator methionine" description="Removed" evidence="7">
    <location>
        <position position="1"/>
    </location>
</feature>
<feature type="chain" id="PRO_0000285097" description="Golgi integral membrane protein 4">
    <location>
        <begin position="2"/>
        <end position="696"/>
    </location>
</feature>
<feature type="topological domain" description="Cytoplasmic" evidence="3">
    <location>
        <begin position="2"/>
        <end position="12"/>
    </location>
</feature>
<feature type="transmembrane region" description="Helical; Signal-anchor for type II membrane protein" evidence="3">
    <location>
        <begin position="13"/>
        <end position="33"/>
    </location>
</feature>
<feature type="topological domain" description="Lumenal" evidence="3">
    <location>
        <begin position="34"/>
        <end position="696"/>
    </location>
</feature>
<feature type="region of interest" description="Golgi targeting">
    <location>
        <begin position="38"/>
        <end position="107"/>
    </location>
</feature>
<feature type="region of interest" description="Endosome targeting">
    <location>
        <begin position="80"/>
        <end position="175"/>
    </location>
</feature>
<feature type="region of interest" description="Disordered" evidence="4">
    <location>
        <begin position="122"/>
        <end position="145"/>
    </location>
</feature>
<feature type="region of interest" description="Golgi targeting">
    <location>
        <begin position="176"/>
        <end position="248"/>
    </location>
</feature>
<feature type="region of interest" description="Disordered" evidence="4">
    <location>
        <begin position="244"/>
        <end position="391"/>
    </location>
</feature>
<feature type="region of interest" description="Disordered" evidence="4">
    <location>
        <begin position="427"/>
        <end position="696"/>
    </location>
</feature>
<feature type="coiled-coil region" evidence="3">
    <location>
        <begin position="35"/>
        <end position="244"/>
    </location>
</feature>
<feature type="compositionally biased region" description="Basic and acidic residues" evidence="4">
    <location>
        <begin position="123"/>
        <end position="145"/>
    </location>
</feature>
<feature type="compositionally biased region" description="Polar residues" evidence="4">
    <location>
        <begin position="254"/>
        <end position="269"/>
    </location>
</feature>
<feature type="compositionally biased region" description="Basic and acidic residues" evidence="4">
    <location>
        <begin position="271"/>
        <end position="281"/>
    </location>
</feature>
<feature type="compositionally biased region" description="Basic and acidic residues" evidence="4">
    <location>
        <begin position="298"/>
        <end position="313"/>
    </location>
</feature>
<feature type="compositionally biased region" description="Basic and acidic residues" evidence="4">
    <location>
        <begin position="324"/>
        <end position="343"/>
    </location>
</feature>
<feature type="compositionally biased region" description="Basic and acidic residues" evidence="4">
    <location>
        <begin position="355"/>
        <end position="364"/>
    </location>
</feature>
<feature type="compositionally biased region" description="Basic and acidic residues" evidence="4">
    <location>
        <begin position="370"/>
        <end position="380"/>
    </location>
</feature>
<feature type="compositionally biased region" description="Low complexity" evidence="4">
    <location>
        <begin position="436"/>
        <end position="453"/>
    </location>
</feature>
<feature type="compositionally biased region" description="Basic and acidic residues" evidence="4">
    <location>
        <begin position="464"/>
        <end position="476"/>
    </location>
</feature>
<feature type="compositionally biased region" description="Basic and acidic residues" evidence="4">
    <location>
        <begin position="505"/>
        <end position="545"/>
    </location>
</feature>
<feature type="compositionally biased region" description="Acidic residues" evidence="4">
    <location>
        <begin position="604"/>
        <end position="626"/>
    </location>
</feature>
<feature type="compositionally biased region" description="Basic and acidic residues" evidence="4">
    <location>
        <begin position="627"/>
        <end position="638"/>
    </location>
</feature>
<feature type="compositionally biased region" description="Basic and acidic residues" evidence="4">
    <location>
        <begin position="661"/>
        <end position="672"/>
    </location>
</feature>
<feature type="compositionally biased region" description="Acidic residues" evidence="4">
    <location>
        <begin position="673"/>
        <end position="683"/>
    </location>
</feature>
<feature type="modified residue" description="Phosphoserine" evidence="10">
    <location>
        <position position="364"/>
    </location>
</feature>
<feature type="modified residue" description="Phosphoserine" evidence="10">
    <location>
        <position position="538"/>
    </location>
</feature>
<feature type="modified residue" description="Phosphotyrosine" evidence="10">
    <location>
        <position position="613"/>
    </location>
</feature>
<feature type="modified residue" description="Phosphothreonine" evidence="10">
    <location>
        <position position="626"/>
    </location>
</feature>
<feature type="modified residue" description="Phosphotyrosine" evidence="2">
    <location>
        <position position="673"/>
    </location>
</feature>
<feature type="lipid moiety-binding region" description="N-myristoyl glycine" evidence="7">
    <location>
        <position position="2"/>
    </location>
</feature>
<feature type="glycosylation site" description="N-linked (GlcNAc...) asparagine" evidence="3">
    <location>
        <position position="257"/>
    </location>
</feature>
<feature type="sequence variant" id="VAR_036611" description="In a breast cancer sample; somatic mutation." evidence="6">
    <original>A</original>
    <variation>V</variation>
    <location>
        <position position="312"/>
    </location>
</feature>
<reference key="1">
    <citation type="journal article" date="1997" name="Mol. Biol. Cell">
        <title>Sequence and overexpression of GPP130/GIMPc: evidence for saturable pH-sensitive targeting of a type II early Golgi membrane protein.</title>
        <authorList>
            <person name="Linstedt A.D."/>
            <person name="Mehta A."/>
            <person name="Suhan J."/>
            <person name="Reggio H."/>
            <person name="Hauri H.-P."/>
        </authorList>
    </citation>
    <scope>NUCLEOTIDE SEQUENCE [MRNA]</scope>
    <scope>SUBCELLULAR LOCATION</scope>
    <scope>PHOSPHORYLATION</scope>
    <scope>GLYCOSYLATION</scope>
    <scope>TOPOLOGY</scope>
    <source>
        <tissue>Small intestine</tissue>
    </source>
</reference>
<reference key="2">
    <citation type="journal article" date="2001" name="Mol. Biol. Cell">
        <title>Lumenal endosomal and Golgi-retrieval determinants involved in pH-sensitive targeting of an early Golgi protein.</title>
        <authorList>
            <person name="Bachert C."/>
            <person name="Lee T.H."/>
            <person name="Linstedt A.D."/>
        </authorList>
    </citation>
    <scope>SUBCELLULAR LOCATION</scope>
</reference>
<reference key="3">
    <citation type="journal article" date="2004" name="Mol. Biol. Cell">
        <title>A cycling cis-Golgi protein mediates endosome-to-Golgi traffic.</title>
        <authorList>
            <person name="Natarajan R."/>
            <person name="Linstedt A.D."/>
        </authorList>
    </citation>
    <scope>FUNCTION</scope>
</reference>
<reference key="4">
    <citation type="journal article" date="2006" name="Cell">
        <title>Global, in vivo, and site-specific phosphorylation dynamics in signaling networks.</title>
        <authorList>
            <person name="Olsen J.V."/>
            <person name="Blagoev B."/>
            <person name="Gnad F."/>
            <person name="Macek B."/>
            <person name="Kumar C."/>
            <person name="Mortensen P."/>
            <person name="Mann M."/>
        </authorList>
    </citation>
    <scope>IDENTIFICATION BY MASS SPECTROMETRY [LARGE SCALE ANALYSIS]</scope>
    <source>
        <tissue>Cervix carcinoma</tissue>
    </source>
</reference>
<reference key="5">
    <citation type="journal article" date="2011" name="BMC Syst. Biol.">
        <title>Initial characterization of the human central proteome.</title>
        <authorList>
            <person name="Burkard T.R."/>
            <person name="Planyavsky M."/>
            <person name="Kaupe I."/>
            <person name="Breitwieser F.P."/>
            <person name="Buerckstuemmer T."/>
            <person name="Bennett K.L."/>
            <person name="Superti-Furga G."/>
            <person name="Colinge J."/>
        </authorList>
    </citation>
    <scope>IDENTIFICATION BY MASS SPECTROMETRY [LARGE SCALE ANALYSIS]</scope>
</reference>
<reference key="6">
    <citation type="journal article" date="2014" name="J. Proteomics">
        <title>An enzyme assisted RP-RPLC approach for in-depth analysis of human liver phosphoproteome.</title>
        <authorList>
            <person name="Bian Y."/>
            <person name="Song C."/>
            <person name="Cheng K."/>
            <person name="Dong M."/>
            <person name="Wang F."/>
            <person name="Huang J."/>
            <person name="Sun D."/>
            <person name="Wang L."/>
            <person name="Ye M."/>
            <person name="Zou H."/>
        </authorList>
    </citation>
    <scope>PHOSPHORYLATION [LARGE SCALE ANALYSIS] AT SER-364; SER-538; TYR-613 AND THR-626</scope>
    <scope>IDENTIFICATION BY MASS SPECTROMETRY [LARGE SCALE ANALYSIS]</scope>
    <source>
        <tissue>Liver</tissue>
    </source>
</reference>
<reference key="7">
    <citation type="journal article" date="2014" name="Nat. Commun.">
        <title>Global profiling of co- and post-translationally N-myristoylated proteomes in human cells.</title>
        <authorList>
            <person name="Thinon E."/>
            <person name="Serwa R.A."/>
            <person name="Broncel M."/>
            <person name="Brannigan J.A."/>
            <person name="Brassat U."/>
            <person name="Wright M.H."/>
            <person name="Heal W.P."/>
            <person name="Wilkinson A.J."/>
            <person name="Mann D.J."/>
            <person name="Tate E.W."/>
        </authorList>
    </citation>
    <scope>MYRISTOYLATION AT GLY-2</scope>
    <scope>CLEAVAGE OF INITIATOR METHIONINE</scope>
    <scope>IDENTIFICATION BY MASS SPECTROMETRY</scope>
</reference>
<reference key="8">
    <citation type="journal article" date="2006" name="Science">
        <title>The consensus coding sequences of human breast and colorectal cancers.</title>
        <authorList>
            <person name="Sjoeblom T."/>
            <person name="Jones S."/>
            <person name="Wood L.D."/>
            <person name="Parsons D.W."/>
            <person name="Lin J."/>
            <person name="Barber T.D."/>
            <person name="Mandelker D."/>
            <person name="Leary R.J."/>
            <person name="Ptak J."/>
            <person name="Silliman N."/>
            <person name="Szabo S."/>
            <person name="Buckhaults P."/>
            <person name="Farrell C."/>
            <person name="Meeh P."/>
            <person name="Markowitz S.D."/>
            <person name="Willis J."/>
            <person name="Dawson D."/>
            <person name="Willson J.K.V."/>
            <person name="Gazdar A.F."/>
            <person name="Hartigan J."/>
            <person name="Wu L."/>
            <person name="Liu C."/>
            <person name="Parmigiani G."/>
            <person name="Park B.H."/>
            <person name="Bachman K.E."/>
            <person name="Papadopoulos N."/>
            <person name="Vogelstein B."/>
            <person name="Kinzler K.W."/>
            <person name="Velculescu V.E."/>
        </authorList>
    </citation>
    <scope>VARIANT [LARGE SCALE ANALYSIS] VAL-312</scope>
</reference>
<sequence length="696" mass="81880">MGNGMCSRKQKRIFQTLLLLTVVFGFLYGAMLYYELQTQLRKAEAVALKYQQHQESLSAQLQVVYEHRSRLEKSLQKERLEHKKAKEDFLVYKLEAQETLNKGRQDSNSRYSALNVQHQMLKSQHEELKKQHSDLEEEHRKQGEDFSRTFNDHKQKYLQLQQEKEQELSKLKETVYNLREENRQLRKAHQDIHTQLQDVKQQHKNLLSEHEQLVVTLEDHKSALAAAQTQVAEYKQLKDTLNRIPSLRKPDPAEQQNVTQVAHSPQGYNTAREKPTREVQEVSRNNDVWQNHEAVPGRAEDTKLYAPTHKEAEFQAPPEPIQQEVERREPEEHQVEEEHRKALEEEEMEQVGQAEHLEEEHDPSPEEQDREWKEQHEQREAANLLEGHARAEVYPSAKPMIKFQSPYEEQLEQQRLAVQQVEEAQQLREHQEALHQQRLQGHLLRQQEQQQQQVAREMALQRQAELEEGRPQHQEQLRQQAHYDAMDNDIVQGAEDQGIQGEEGAYERDNQHQDEAEGDPGNRHEPREQGPREADPESEADRAAVEDINPADDPNNQGEDEFEEAEQVREENLPDENEEQKQSNQKQENTEVEEHLVMAGNPDQQEDNVDEQYQEEAEEEVQEDLTEEKKRELEHNAEETYGENDENTDDKNNDGEEQEVRDDNRPKGREEHYEEEEEEEEDGAAVAEKSHRRAEM</sequence>
<proteinExistence type="evidence at protein level"/>
<comment type="function">
    <text evidence="5">Plays a role in endosome to Golgi protein trafficking; mediates protein transport along the late endosome-bypass pathway from the early endosome to the Golgi.</text>
</comment>
<comment type="subcellular location">
    <subcellularLocation>
        <location>Golgi apparatus</location>
        <location>Golgi stack membrane</location>
        <topology>Single-pass type II membrane protein</topology>
    </subcellularLocation>
    <subcellularLocation>
        <location>Endosome membrane</location>
        <topology>Single-pass type II membrane protein</topology>
    </subcellularLocation>
    <subcellularLocation>
        <location evidence="9">Membrane</location>
        <topology evidence="9">Lipid-anchor</topology>
    </subcellularLocation>
    <text>Localizes to cis and medial Golgi cisternae. Probably cycles between early Golgi and distal compartments like endosome.</text>
</comment>
<comment type="PTM">
    <text evidence="8">Phosphorylated probably by c-AMP-dependent kinases in its lumenal part.</text>
</comment>
<comment type="PTM">
    <text evidence="1">O-glycosylated; modified by sialic acid residues.</text>
</comment>
<comment type="PTM">
    <text evidence="8">N-glycosylated; N-glycans are probably of the complex type and modified by sialic acid residues.</text>
</comment>
<comment type="similarity">
    <text evidence="9">Belongs to the GOLIM4 family.</text>
</comment>
<dbReference type="EMBL" id="U55853">
    <property type="protein sequence ID" value="AAB58419.1"/>
    <property type="molecule type" value="mRNA"/>
</dbReference>
<dbReference type="CCDS" id="CCDS3204.1"/>
<dbReference type="RefSeq" id="NP_055313.1">
    <property type="nucleotide sequence ID" value="NM_014498.5"/>
</dbReference>
<dbReference type="SMR" id="O00461"/>
<dbReference type="BioGRID" id="118146">
    <property type="interactions" value="108"/>
</dbReference>
<dbReference type="DIP" id="DIP-61898N"/>
<dbReference type="FunCoup" id="O00461">
    <property type="interactions" value="1864"/>
</dbReference>
<dbReference type="IntAct" id="O00461">
    <property type="interactions" value="82"/>
</dbReference>
<dbReference type="MINT" id="O00461"/>
<dbReference type="STRING" id="9606.ENSP00000417354"/>
<dbReference type="GlyCosmos" id="O00461">
    <property type="glycosylation" value="7 sites, 3 glycans"/>
</dbReference>
<dbReference type="GlyGen" id="O00461">
    <property type="glycosylation" value="15 sites, 4 N-linked glycans (1 site), 4 O-linked glycans (14 sites)"/>
</dbReference>
<dbReference type="iPTMnet" id="O00461"/>
<dbReference type="PhosphoSitePlus" id="O00461"/>
<dbReference type="SwissPalm" id="O00461"/>
<dbReference type="BioMuta" id="GOLIM4"/>
<dbReference type="jPOST" id="O00461"/>
<dbReference type="MassIVE" id="O00461"/>
<dbReference type="PaxDb" id="9606-ENSP00000417354"/>
<dbReference type="PeptideAtlas" id="O00461"/>
<dbReference type="ProteomicsDB" id="47911"/>
<dbReference type="Pumba" id="O00461"/>
<dbReference type="Antibodypedia" id="952">
    <property type="antibodies" value="128 antibodies from 20 providers"/>
</dbReference>
<dbReference type="DNASU" id="27333"/>
<dbReference type="Ensembl" id="ENST00000470487.6">
    <property type="protein sequence ID" value="ENSP00000417354.1"/>
    <property type="gene ID" value="ENSG00000173905.9"/>
</dbReference>
<dbReference type="GeneID" id="27333"/>
<dbReference type="KEGG" id="hsa:27333"/>
<dbReference type="MANE-Select" id="ENST00000470487.6">
    <property type="protein sequence ID" value="ENSP00000417354.1"/>
    <property type="RefSeq nucleotide sequence ID" value="NM_014498.5"/>
    <property type="RefSeq protein sequence ID" value="NP_055313.1"/>
</dbReference>
<dbReference type="UCSC" id="uc003ffe.3">
    <property type="organism name" value="human"/>
</dbReference>
<dbReference type="AGR" id="HGNC:15448"/>
<dbReference type="CTD" id="27333"/>
<dbReference type="DisGeNET" id="27333"/>
<dbReference type="GeneCards" id="GOLIM4"/>
<dbReference type="HGNC" id="HGNC:15448">
    <property type="gene designation" value="GOLIM4"/>
</dbReference>
<dbReference type="HPA" id="ENSG00000173905">
    <property type="expression patterns" value="Low tissue specificity"/>
</dbReference>
<dbReference type="MalaCards" id="GOLIM4"/>
<dbReference type="MIM" id="606805">
    <property type="type" value="gene"/>
</dbReference>
<dbReference type="neXtProt" id="NX_O00461"/>
<dbReference type="OpenTargets" id="ENSG00000173905"/>
<dbReference type="PharmGKB" id="PA162390001"/>
<dbReference type="VEuPathDB" id="HostDB:ENSG00000173905"/>
<dbReference type="eggNOG" id="ENOG502R4Q5">
    <property type="taxonomic scope" value="Eukaryota"/>
</dbReference>
<dbReference type="GeneTree" id="ENSGT00390000004096"/>
<dbReference type="HOGENOM" id="CLU_030773_0_0_1"/>
<dbReference type="InParanoid" id="O00461"/>
<dbReference type="OMA" id="HEDQQAH"/>
<dbReference type="OrthoDB" id="6288648at2759"/>
<dbReference type="PAN-GO" id="O00461">
    <property type="GO annotations" value="2 GO annotations based on evolutionary models"/>
</dbReference>
<dbReference type="PhylomeDB" id="O00461"/>
<dbReference type="TreeFam" id="TF333101"/>
<dbReference type="PathwayCommons" id="O00461"/>
<dbReference type="Reactome" id="R-HSA-6811438">
    <property type="pathway name" value="Intra-Golgi traffic"/>
</dbReference>
<dbReference type="SignaLink" id="O00461"/>
<dbReference type="BioGRID-ORCS" id="27333">
    <property type="hits" value="12 hits in 1151 CRISPR screens"/>
</dbReference>
<dbReference type="ChiTaRS" id="GOLIM4">
    <property type="organism name" value="human"/>
</dbReference>
<dbReference type="GenomeRNAi" id="27333"/>
<dbReference type="Pharos" id="O00461">
    <property type="development level" value="Tbio"/>
</dbReference>
<dbReference type="PRO" id="PR:O00461"/>
<dbReference type="Proteomes" id="UP000005640">
    <property type="component" value="Chromosome 3"/>
</dbReference>
<dbReference type="RNAct" id="O00461">
    <property type="molecule type" value="protein"/>
</dbReference>
<dbReference type="Bgee" id="ENSG00000173905">
    <property type="expression patterns" value="Expressed in tendon of biceps brachii and 200 other cell types or tissues"/>
</dbReference>
<dbReference type="ExpressionAtlas" id="O00461">
    <property type="expression patterns" value="baseline and differential"/>
</dbReference>
<dbReference type="GO" id="GO:0005801">
    <property type="term" value="C:cis-Golgi network"/>
    <property type="evidence" value="ECO:0000304"/>
    <property type="project" value="ProtInc"/>
</dbReference>
<dbReference type="GO" id="GO:0030139">
    <property type="term" value="C:endocytic vesicle"/>
    <property type="evidence" value="ECO:0000304"/>
    <property type="project" value="ProtInc"/>
</dbReference>
<dbReference type="GO" id="GO:0010008">
    <property type="term" value="C:endosome membrane"/>
    <property type="evidence" value="ECO:0007669"/>
    <property type="project" value="UniProtKB-SubCell"/>
</dbReference>
<dbReference type="GO" id="GO:0005794">
    <property type="term" value="C:Golgi apparatus"/>
    <property type="evidence" value="ECO:0000314"/>
    <property type="project" value="MGI"/>
</dbReference>
<dbReference type="GO" id="GO:0032580">
    <property type="term" value="C:Golgi cisterna membrane"/>
    <property type="evidence" value="ECO:0007669"/>
    <property type="project" value="UniProtKB-SubCell"/>
</dbReference>
<dbReference type="GO" id="GO:0005796">
    <property type="term" value="C:Golgi lumen"/>
    <property type="evidence" value="ECO:0000304"/>
    <property type="project" value="ProtInc"/>
</dbReference>
<dbReference type="GO" id="GO:0000139">
    <property type="term" value="C:Golgi membrane"/>
    <property type="evidence" value="ECO:0000304"/>
    <property type="project" value="Reactome"/>
</dbReference>
<dbReference type="GO" id="GO:0016020">
    <property type="term" value="C:membrane"/>
    <property type="evidence" value="ECO:0000314"/>
    <property type="project" value="MGI"/>
</dbReference>
<dbReference type="GO" id="GO:0030133">
    <property type="term" value="C:transport vesicle"/>
    <property type="evidence" value="ECO:0000304"/>
    <property type="project" value="Reactome"/>
</dbReference>
<dbReference type="InterPro" id="IPR042336">
    <property type="entry name" value="GOLIM4"/>
</dbReference>
<dbReference type="PANTHER" id="PTHR22909">
    <property type="entry name" value="GOLGI INTEGRAL MEMBRANE PROTEIN 4"/>
    <property type="match status" value="1"/>
</dbReference>
<dbReference type="PANTHER" id="PTHR22909:SF22">
    <property type="entry name" value="GOLGI INTEGRAL MEMBRANE PROTEIN 4"/>
    <property type="match status" value="1"/>
</dbReference>
<evidence type="ECO:0000250" key="1"/>
<evidence type="ECO:0000250" key="2">
    <source>
        <dbReference type="UniProtKB" id="Q8BXA1"/>
    </source>
</evidence>
<evidence type="ECO:0000255" key="3"/>
<evidence type="ECO:0000256" key="4">
    <source>
        <dbReference type="SAM" id="MobiDB-lite"/>
    </source>
</evidence>
<evidence type="ECO:0000269" key="5">
    <source>
    </source>
</evidence>
<evidence type="ECO:0000269" key="6">
    <source>
    </source>
</evidence>
<evidence type="ECO:0000269" key="7">
    <source>
    </source>
</evidence>
<evidence type="ECO:0000269" key="8">
    <source>
    </source>
</evidence>
<evidence type="ECO:0000305" key="9"/>
<evidence type="ECO:0007744" key="10">
    <source>
    </source>
</evidence>